<sequence length="190" mass="20161">MAVLVLASASPRRLDLLRQIAIMPGLVDPAHVDETPLKGELPVPHARRLAEAKALAVAGRHPGAFVLAADTVVACGRRILPKAEDEATARQCLELLSGRRHRVVGGICLIAPDGRIGRRTVTTSVTFKRLSHAEMAAYAASGEWDGKAGGYAIQGLAARYVRDIQGSYSNIVGLSLFETAQLLDGFGFAP</sequence>
<accession>Q2W1Y3</accession>
<comment type="function">
    <text evidence="1">Nucleoside triphosphate pyrophosphatase that hydrolyzes dTTP and UTP. May have a dual role in cell division arrest and in preventing the incorporation of modified nucleotides into cellular nucleic acids.</text>
</comment>
<comment type="catalytic activity">
    <reaction evidence="1">
        <text>dTTP + H2O = dTMP + diphosphate + H(+)</text>
        <dbReference type="Rhea" id="RHEA:28534"/>
        <dbReference type="ChEBI" id="CHEBI:15377"/>
        <dbReference type="ChEBI" id="CHEBI:15378"/>
        <dbReference type="ChEBI" id="CHEBI:33019"/>
        <dbReference type="ChEBI" id="CHEBI:37568"/>
        <dbReference type="ChEBI" id="CHEBI:63528"/>
        <dbReference type="EC" id="3.6.1.9"/>
    </reaction>
</comment>
<comment type="catalytic activity">
    <reaction evidence="1">
        <text>UTP + H2O = UMP + diphosphate + H(+)</text>
        <dbReference type="Rhea" id="RHEA:29395"/>
        <dbReference type="ChEBI" id="CHEBI:15377"/>
        <dbReference type="ChEBI" id="CHEBI:15378"/>
        <dbReference type="ChEBI" id="CHEBI:33019"/>
        <dbReference type="ChEBI" id="CHEBI:46398"/>
        <dbReference type="ChEBI" id="CHEBI:57865"/>
        <dbReference type="EC" id="3.6.1.9"/>
    </reaction>
</comment>
<comment type="cofactor">
    <cofactor evidence="1">
        <name>a divalent metal cation</name>
        <dbReference type="ChEBI" id="CHEBI:60240"/>
    </cofactor>
</comment>
<comment type="subcellular location">
    <subcellularLocation>
        <location evidence="1">Cytoplasm</location>
    </subcellularLocation>
</comment>
<comment type="similarity">
    <text evidence="1">Belongs to the Maf family. YhdE subfamily.</text>
</comment>
<name>NTPPA_PARM1</name>
<gene>
    <name type="ordered locus">amb3338</name>
</gene>
<reference key="1">
    <citation type="journal article" date="2005" name="DNA Res.">
        <title>Complete genome sequence of the facultative anaerobic magnetotactic bacterium Magnetospirillum sp. strain AMB-1.</title>
        <authorList>
            <person name="Matsunaga T."/>
            <person name="Okamura Y."/>
            <person name="Fukuda Y."/>
            <person name="Wahyudi A.T."/>
            <person name="Murase Y."/>
            <person name="Takeyama H."/>
        </authorList>
    </citation>
    <scope>NUCLEOTIDE SEQUENCE [LARGE SCALE GENOMIC DNA]</scope>
    <source>
        <strain>ATCC 700264 / AMB-1</strain>
    </source>
</reference>
<feature type="chain" id="PRO_0000267333" description="dTTP/UTP pyrophosphatase">
    <location>
        <begin position="1"/>
        <end position="190"/>
    </location>
</feature>
<feature type="active site" description="Proton acceptor" evidence="1">
    <location>
        <position position="70"/>
    </location>
</feature>
<feature type="site" description="Important for substrate specificity" evidence="1">
    <location>
        <position position="12"/>
    </location>
</feature>
<feature type="site" description="Important for substrate specificity" evidence="1">
    <location>
        <position position="71"/>
    </location>
</feature>
<feature type="site" description="Important for substrate specificity" evidence="1">
    <location>
        <position position="154"/>
    </location>
</feature>
<protein>
    <recommendedName>
        <fullName evidence="1">dTTP/UTP pyrophosphatase</fullName>
        <shortName evidence="1">dTTPase/UTPase</shortName>
        <ecNumber evidence="1">3.6.1.9</ecNumber>
    </recommendedName>
    <alternativeName>
        <fullName evidence="1">Nucleoside triphosphate pyrophosphatase</fullName>
    </alternativeName>
    <alternativeName>
        <fullName evidence="1">Nucleotide pyrophosphatase</fullName>
        <shortName evidence="1">Nucleotide PPase</shortName>
    </alternativeName>
</protein>
<dbReference type="EC" id="3.6.1.9" evidence="1"/>
<dbReference type="EMBL" id="AP007255">
    <property type="protein sequence ID" value="BAE52142.1"/>
    <property type="molecule type" value="Genomic_DNA"/>
</dbReference>
<dbReference type="RefSeq" id="WP_011385698.1">
    <property type="nucleotide sequence ID" value="NC_007626.1"/>
</dbReference>
<dbReference type="SMR" id="Q2W1Y3"/>
<dbReference type="STRING" id="342108.amb3338"/>
<dbReference type="KEGG" id="mag:amb3338"/>
<dbReference type="HOGENOM" id="CLU_040416_2_0_5"/>
<dbReference type="OrthoDB" id="9807767at2"/>
<dbReference type="Proteomes" id="UP000007058">
    <property type="component" value="Chromosome"/>
</dbReference>
<dbReference type="GO" id="GO:0005737">
    <property type="term" value="C:cytoplasm"/>
    <property type="evidence" value="ECO:0007669"/>
    <property type="project" value="UniProtKB-SubCell"/>
</dbReference>
<dbReference type="GO" id="GO:0036218">
    <property type="term" value="F:dTTP diphosphatase activity"/>
    <property type="evidence" value="ECO:0007669"/>
    <property type="project" value="RHEA"/>
</dbReference>
<dbReference type="GO" id="GO:0036221">
    <property type="term" value="F:UTP diphosphatase activity"/>
    <property type="evidence" value="ECO:0007669"/>
    <property type="project" value="RHEA"/>
</dbReference>
<dbReference type="GO" id="GO:0009117">
    <property type="term" value="P:nucleotide metabolic process"/>
    <property type="evidence" value="ECO:0007669"/>
    <property type="project" value="UniProtKB-KW"/>
</dbReference>
<dbReference type="CDD" id="cd00555">
    <property type="entry name" value="Maf"/>
    <property type="match status" value="1"/>
</dbReference>
<dbReference type="Gene3D" id="3.90.950.10">
    <property type="match status" value="1"/>
</dbReference>
<dbReference type="HAMAP" id="MF_00528">
    <property type="entry name" value="Maf"/>
    <property type="match status" value="1"/>
</dbReference>
<dbReference type="InterPro" id="IPR029001">
    <property type="entry name" value="ITPase-like_fam"/>
</dbReference>
<dbReference type="InterPro" id="IPR003697">
    <property type="entry name" value="Maf-like"/>
</dbReference>
<dbReference type="NCBIfam" id="TIGR00172">
    <property type="entry name" value="maf"/>
    <property type="match status" value="1"/>
</dbReference>
<dbReference type="PANTHER" id="PTHR43213">
    <property type="entry name" value="BIFUNCTIONAL DTTP/UTP PYROPHOSPHATASE/METHYLTRANSFERASE PROTEIN-RELATED"/>
    <property type="match status" value="1"/>
</dbReference>
<dbReference type="PANTHER" id="PTHR43213:SF5">
    <property type="entry name" value="BIFUNCTIONAL DTTP_UTP PYROPHOSPHATASE_METHYLTRANSFERASE PROTEIN-RELATED"/>
    <property type="match status" value="1"/>
</dbReference>
<dbReference type="Pfam" id="PF02545">
    <property type="entry name" value="Maf"/>
    <property type="match status" value="1"/>
</dbReference>
<dbReference type="PIRSF" id="PIRSF006305">
    <property type="entry name" value="Maf"/>
    <property type="match status" value="1"/>
</dbReference>
<dbReference type="SUPFAM" id="SSF52972">
    <property type="entry name" value="ITPase-like"/>
    <property type="match status" value="1"/>
</dbReference>
<proteinExistence type="inferred from homology"/>
<organism>
    <name type="scientific">Paramagnetospirillum magneticum (strain ATCC 700264 / AMB-1)</name>
    <name type="common">Magnetospirillum magneticum</name>
    <dbReference type="NCBI Taxonomy" id="342108"/>
    <lineage>
        <taxon>Bacteria</taxon>
        <taxon>Pseudomonadati</taxon>
        <taxon>Pseudomonadota</taxon>
        <taxon>Alphaproteobacteria</taxon>
        <taxon>Rhodospirillales</taxon>
        <taxon>Magnetospirillaceae</taxon>
        <taxon>Paramagnetospirillum</taxon>
    </lineage>
</organism>
<evidence type="ECO:0000255" key="1">
    <source>
        <dbReference type="HAMAP-Rule" id="MF_00528"/>
    </source>
</evidence>
<keyword id="KW-0963">Cytoplasm</keyword>
<keyword id="KW-0378">Hydrolase</keyword>
<keyword id="KW-0546">Nucleotide metabolism</keyword>